<reference key="1">
    <citation type="journal article" date="1994" name="Mol. Cell. Biol.">
        <title>Characterization of a family of related cellular transcription factors which can modulate human immunodeficiency virus type 1 transcription in vitro.</title>
        <authorList>
            <person name="Yoon J.-B."/>
            <person name="Li G."/>
            <person name="Roeder R.G."/>
        </authorList>
    </citation>
    <scope>NUCLEOTIDE SEQUENCE [MRNA] (ISOFORMS 1 AND 2)</scope>
    <scope>FUNCTION</scope>
    <scope>SUBCELLULAR LOCATION</scope>
    <scope>VARIANT SER-109</scope>
</reference>
<reference key="2">
    <citation type="journal article" date="2000" name="J. Biol. Chem.">
        <title>Cloning of factors related to HIV-inducible LBP proteins that regulate steroidogenic factor-1-independent human placental transcription of the cholesterol side-chain cleavage enzyme, P450scc.</title>
        <authorList>
            <person name="Huang N."/>
            <person name="Miller W.L."/>
        </authorList>
    </citation>
    <scope>NUCLEOTIDE SEQUENCE [MRNA] (ISOFORM 1)</scope>
    <scope>FUNCTION</scope>
    <scope>TISSUE SPECIFICITY</scope>
    <source>
        <tissue>Placenta</tissue>
    </source>
</reference>
<reference key="3">
    <citation type="journal article" date="2004" name="Nat. Genet.">
        <title>Complete sequencing and characterization of 21,243 full-length human cDNAs.</title>
        <authorList>
            <person name="Ota T."/>
            <person name="Suzuki Y."/>
            <person name="Nishikawa T."/>
            <person name="Otsuki T."/>
            <person name="Sugiyama T."/>
            <person name="Irie R."/>
            <person name="Wakamatsu A."/>
            <person name="Hayashi K."/>
            <person name="Sato H."/>
            <person name="Nagai K."/>
            <person name="Kimura K."/>
            <person name="Makita H."/>
            <person name="Sekine M."/>
            <person name="Obayashi M."/>
            <person name="Nishi T."/>
            <person name="Shibahara T."/>
            <person name="Tanaka T."/>
            <person name="Ishii S."/>
            <person name="Yamamoto J."/>
            <person name="Saito K."/>
            <person name="Kawai Y."/>
            <person name="Isono Y."/>
            <person name="Nakamura Y."/>
            <person name="Nagahari K."/>
            <person name="Murakami K."/>
            <person name="Yasuda T."/>
            <person name="Iwayanagi T."/>
            <person name="Wagatsuma M."/>
            <person name="Shiratori A."/>
            <person name="Sudo H."/>
            <person name="Hosoiri T."/>
            <person name="Kaku Y."/>
            <person name="Kodaira H."/>
            <person name="Kondo H."/>
            <person name="Sugawara M."/>
            <person name="Takahashi M."/>
            <person name="Kanda K."/>
            <person name="Yokoi T."/>
            <person name="Furuya T."/>
            <person name="Kikkawa E."/>
            <person name="Omura Y."/>
            <person name="Abe K."/>
            <person name="Kamihara K."/>
            <person name="Katsuta N."/>
            <person name="Sato K."/>
            <person name="Tanikawa M."/>
            <person name="Yamazaki M."/>
            <person name="Ninomiya K."/>
            <person name="Ishibashi T."/>
            <person name="Yamashita H."/>
            <person name="Murakawa K."/>
            <person name="Fujimori K."/>
            <person name="Tanai H."/>
            <person name="Kimata M."/>
            <person name="Watanabe M."/>
            <person name="Hiraoka S."/>
            <person name="Chiba Y."/>
            <person name="Ishida S."/>
            <person name="Ono Y."/>
            <person name="Takiguchi S."/>
            <person name="Watanabe S."/>
            <person name="Yosida M."/>
            <person name="Hotuta T."/>
            <person name="Kusano J."/>
            <person name="Kanehori K."/>
            <person name="Takahashi-Fujii A."/>
            <person name="Hara H."/>
            <person name="Tanase T.-O."/>
            <person name="Nomura Y."/>
            <person name="Togiya S."/>
            <person name="Komai F."/>
            <person name="Hara R."/>
            <person name="Takeuchi K."/>
            <person name="Arita M."/>
            <person name="Imose N."/>
            <person name="Musashino K."/>
            <person name="Yuuki H."/>
            <person name="Oshima A."/>
            <person name="Sasaki N."/>
            <person name="Aotsuka S."/>
            <person name="Yoshikawa Y."/>
            <person name="Matsunawa H."/>
            <person name="Ichihara T."/>
            <person name="Shiohata N."/>
            <person name="Sano S."/>
            <person name="Moriya S."/>
            <person name="Momiyama H."/>
            <person name="Satoh N."/>
            <person name="Takami S."/>
            <person name="Terashima Y."/>
            <person name="Suzuki O."/>
            <person name="Nakagawa S."/>
            <person name="Senoh A."/>
            <person name="Mizoguchi H."/>
            <person name="Goto Y."/>
            <person name="Shimizu F."/>
            <person name="Wakebe H."/>
            <person name="Hishigaki H."/>
            <person name="Watanabe T."/>
            <person name="Sugiyama A."/>
            <person name="Takemoto M."/>
            <person name="Kawakami B."/>
            <person name="Yamazaki M."/>
            <person name="Watanabe K."/>
            <person name="Kumagai A."/>
            <person name="Itakura S."/>
            <person name="Fukuzumi Y."/>
            <person name="Fujimori Y."/>
            <person name="Komiyama M."/>
            <person name="Tashiro H."/>
            <person name="Tanigami A."/>
            <person name="Fujiwara T."/>
            <person name="Ono T."/>
            <person name="Yamada K."/>
            <person name="Fujii Y."/>
            <person name="Ozaki K."/>
            <person name="Hirao M."/>
            <person name="Ohmori Y."/>
            <person name="Kawabata A."/>
            <person name="Hikiji T."/>
            <person name="Kobatake N."/>
            <person name="Inagaki H."/>
            <person name="Ikema Y."/>
            <person name="Okamoto S."/>
            <person name="Okitani R."/>
            <person name="Kawakami T."/>
            <person name="Noguchi S."/>
            <person name="Itoh T."/>
            <person name="Shigeta K."/>
            <person name="Senba T."/>
            <person name="Matsumura K."/>
            <person name="Nakajima Y."/>
            <person name="Mizuno T."/>
            <person name="Morinaga M."/>
            <person name="Sasaki M."/>
            <person name="Togashi T."/>
            <person name="Oyama M."/>
            <person name="Hata H."/>
            <person name="Watanabe M."/>
            <person name="Komatsu T."/>
            <person name="Mizushima-Sugano J."/>
            <person name="Satoh T."/>
            <person name="Shirai Y."/>
            <person name="Takahashi Y."/>
            <person name="Nakagawa K."/>
            <person name="Okumura K."/>
            <person name="Nagase T."/>
            <person name="Nomura N."/>
            <person name="Kikuchi H."/>
            <person name="Masuho Y."/>
            <person name="Yamashita R."/>
            <person name="Nakai K."/>
            <person name="Yada T."/>
            <person name="Nakamura Y."/>
            <person name="Ohara O."/>
            <person name="Isogai T."/>
            <person name="Sugano S."/>
        </authorList>
    </citation>
    <scope>NUCLEOTIDE SEQUENCE [LARGE SCALE MRNA] (ISOFORM 2)</scope>
</reference>
<reference key="4">
    <citation type="journal article" date="2004" name="Genome Res.">
        <title>The status, quality, and expansion of the NIH full-length cDNA project: the Mammalian Gene Collection (MGC).</title>
        <authorList>
            <consortium name="The MGC Project Team"/>
        </authorList>
    </citation>
    <scope>NUCLEOTIDE SEQUENCE [LARGE SCALE MRNA] (ISOFORM 1)</scope>
    <scope>VARIANT ALA-212</scope>
    <source>
        <tissue>Brain</tissue>
    </source>
</reference>
<reference key="5">
    <citation type="journal article" date="2007" name="BMC Genomics">
        <title>The full-ORF clone resource of the German cDNA consortium.</title>
        <authorList>
            <person name="Bechtel S."/>
            <person name="Rosenfelder H."/>
            <person name="Duda A."/>
            <person name="Schmidt C.P."/>
            <person name="Ernst U."/>
            <person name="Wellenreuther R."/>
            <person name="Mehrle A."/>
            <person name="Schuster C."/>
            <person name="Bahr A."/>
            <person name="Bloecker H."/>
            <person name="Heubner D."/>
            <person name="Hoerlein A."/>
            <person name="Michel G."/>
            <person name="Wedler H."/>
            <person name="Koehrer K."/>
            <person name="Ottenwaelder B."/>
            <person name="Poustka A."/>
            <person name="Wiemann S."/>
            <person name="Schupp I."/>
        </authorList>
    </citation>
    <scope>NUCLEOTIDE SEQUENCE [LARGE SCALE MRNA] OF 394-540</scope>
    <source>
        <tissue>Amygdala</tissue>
    </source>
</reference>
<reference key="6">
    <citation type="journal article" date="1991" name="Science">
        <title>Repression of HIV-1 transcription by a cellular protein.</title>
        <authorList>
            <person name="Kato H."/>
            <person name="Horikoshi M."/>
            <person name="Roeder R.G."/>
        </authorList>
    </citation>
    <scope>FUNCTION</scope>
    <scope>INDUCTION</scope>
</reference>
<reference key="7">
    <citation type="journal article" date="2014" name="J. Proteomics">
        <title>An enzyme assisted RP-RPLC approach for in-depth analysis of human liver phosphoproteome.</title>
        <authorList>
            <person name="Bian Y."/>
            <person name="Song C."/>
            <person name="Cheng K."/>
            <person name="Dong M."/>
            <person name="Wang F."/>
            <person name="Huang J."/>
            <person name="Sun D."/>
            <person name="Wang L."/>
            <person name="Ye M."/>
            <person name="Zou H."/>
        </authorList>
    </citation>
    <scope>PHOSPHORYLATION [LARGE SCALE ANALYSIS] AT SER-22</scope>
    <scope>IDENTIFICATION BY MASS SPECTROMETRY [LARGE SCALE ANALYSIS]</scope>
    <source>
        <tissue>Liver</tissue>
    </source>
</reference>
<dbReference type="EMBL" id="AF198487">
    <property type="protein sequence ID" value="AAF32274.1"/>
    <property type="molecule type" value="mRNA"/>
</dbReference>
<dbReference type="EMBL" id="AK023274">
    <property type="protein sequence ID" value="BAB14501.1"/>
    <property type="molecule type" value="mRNA"/>
</dbReference>
<dbReference type="EMBL" id="BC047235">
    <property type="protein sequence ID" value="AAH47235.1"/>
    <property type="molecule type" value="mRNA"/>
</dbReference>
<dbReference type="EMBL" id="CR749798">
    <property type="protein sequence ID" value="CAH18658.1"/>
    <property type="molecule type" value="mRNA"/>
</dbReference>
<dbReference type="CCDS" id="CCDS2659.1">
    <molecule id="Q9NZI7-1"/>
</dbReference>
<dbReference type="CCDS" id="CCDS46788.1">
    <molecule id="Q9NZI7-4"/>
</dbReference>
<dbReference type="PIR" id="A56205">
    <property type="entry name" value="A56205"/>
</dbReference>
<dbReference type="PIR" id="B56205">
    <property type="entry name" value="B56205"/>
</dbReference>
<dbReference type="RefSeq" id="NP_001121632.1">
    <molecule id="Q9NZI7-4"/>
    <property type="nucleotide sequence ID" value="NM_001128160.2"/>
</dbReference>
<dbReference type="RefSeq" id="NP_001121633.1">
    <molecule id="Q9NZI7-1"/>
    <property type="nucleotide sequence ID" value="NM_001128161.2"/>
</dbReference>
<dbReference type="RefSeq" id="NP_055332.3">
    <molecule id="Q9NZI7-1"/>
    <property type="nucleotide sequence ID" value="NM_014517.4"/>
</dbReference>
<dbReference type="SMR" id="Q9NZI7"/>
<dbReference type="BioGRID" id="113189">
    <property type="interactions" value="76"/>
</dbReference>
<dbReference type="FunCoup" id="Q9NZI7">
    <property type="interactions" value="4137"/>
</dbReference>
<dbReference type="IntAct" id="Q9NZI7">
    <property type="interactions" value="52"/>
</dbReference>
<dbReference type="MINT" id="Q9NZI7"/>
<dbReference type="STRING" id="9606.ENSP00000283629"/>
<dbReference type="GlyGen" id="Q9NZI7">
    <property type="glycosylation" value="1 site, 1 O-linked glycan (1 site)"/>
</dbReference>
<dbReference type="iPTMnet" id="Q9NZI7"/>
<dbReference type="PhosphoSitePlus" id="Q9NZI7"/>
<dbReference type="SwissPalm" id="Q9NZI7"/>
<dbReference type="BioMuta" id="UBP1"/>
<dbReference type="DMDM" id="74719655"/>
<dbReference type="jPOST" id="Q9NZI7"/>
<dbReference type="MassIVE" id="Q9NZI7"/>
<dbReference type="PaxDb" id="9606-ENSP00000283629"/>
<dbReference type="PeptideAtlas" id="Q9NZI7"/>
<dbReference type="ProteomicsDB" id="83408">
    <molecule id="Q9NZI7-1"/>
</dbReference>
<dbReference type="ProteomicsDB" id="83409">
    <molecule id="Q9NZI7-4"/>
</dbReference>
<dbReference type="Pumba" id="Q9NZI7"/>
<dbReference type="Antibodypedia" id="11705">
    <property type="antibodies" value="346 antibodies from 29 providers"/>
</dbReference>
<dbReference type="DNASU" id="7342"/>
<dbReference type="Ensembl" id="ENST00000283628.9">
    <molecule id="Q9NZI7-1"/>
    <property type="protein sequence ID" value="ENSP00000283628.5"/>
    <property type="gene ID" value="ENSG00000153560.12"/>
</dbReference>
<dbReference type="Ensembl" id="ENST00000283629.8">
    <molecule id="Q9NZI7-1"/>
    <property type="protein sequence ID" value="ENSP00000283629.3"/>
    <property type="gene ID" value="ENSG00000153560.12"/>
</dbReference>
<dbReference type="Ensembl" id="ENST00000447368.6">
    <molecule id="Q9NZI7-4"/>
    <property type="protein sequence ID" value="ENSP00000395558.2"/>
    <property type="gene ID" value="ENSG00000153560.12"/>
</dbReference>
<dbReference type="GeneID" id="7342"/>
<dbReference type="KEGG" id="hsa:7342"/>
<dbReference type="MANE-Select" id="ENST00000283629.8">
    <property type="protein sequence ID" value="ENSP00000283629.3"/>
    <property type="RefSeq nucleotide sequence ID" value="NM_014517.5"/>
    <property type="RefSeq protein sequence ID" value="NP_055332.3"/>
</dbReference>
<dbReference type="UCSC" id="uc003cfq.5">
    <molecule id="Q9NZI7-1"/>
    <property type="organism name" value="human"/>
</dbReference>
<dbReference type="AGR" id="HGNC:12507"/>
<dbReference type="CTD" id="7342"/>
<dbReference type="DisGeNET" id="7342"/>
<dbReference type="GeneCards" id="UBP1"/>
<dbReference type="HGNC" id="HGNC:12507">
    <property type="gene designation" value="UBP1"/>
</dbReference>
<dbReference type="HPA" id="ENSG00000153560">
    <property type="expression patterns" value="Low tissue specificity"/>
</dbReference>
<dbReference type="MIM" id="609784">
    <property type="type" value="gene"/>
</dbReference>
<dbReference type="neXtProt" id="NX_Q9NZI7"/>
<dbReference type="OpenTargets" id="ENSG00000153560"/>
<dbReference type="PharmGKB" id="PA37154"/>
<dbReference type="VEuPathDB" id="HostDB:ENSG00000153560"/>
<dbReference type="eggNOG" id="KOG4091">
    <property type="taxonomic scope" value="Eukaryota"/>
</dbReference>
<dbReference type="GeneTree" id="ENSGT00940000156148"/>
<dbReference type="HOGENOM" id="CLU_015127_2_0_1"/>
<dbReference type="InParanoid" id="Q9NZI7"/>
<dbReference type="OMA" id="THINQVY"/>
<dbReference type="OrthoDB" id="9996779at2759"/>
<dbReference type="PAN-GO" id="Q9NZI7">
    <property type="GO annotations" value="4 GO annotations based on evolutionary models"/>
</dbReference>
<dbReference type="PhylomeDB" id="Q9NZI7"/>
<dbReference type="TreeFam" id="TF314132"/>
<dbReference type="PathwayCommons" id="Q9NZI7"/>
<dbReference type="SignaLink" id="Q9NZI7"/>
<dbReference type="BioGRID-ORCS" id="7342">
    <property type="hits" value="21 hits in 1179 CRISPR screens"/>
</dbReference>
<dbReference type="ChiTaRS" id="UBP1">
    <property type="organism name" value="human"/>
</dbReference>
<dbReference type="GenomeRNAi" id="7342"/>
<dbReference type="Pharos" id="Q9NZI7">
    <property type="development level" value="Tbio"/>
</dbReference>
<dbReference type="PRO" id="PR:Q9NZI7"/>
<dbReference type="Proteomes" id="UP000005640">
    <property type="component" value="Chromosome 3"/>
</dbReference>
<dbReference type="RNAct" id="Q9NZI7">
    <property type="molecule type" value="protein"/>
</dbReference>
<dbReference type="Bgee" id="ENSG00000153560">
    <property type="expression patterns" value="Expressed in tibia and 202 other cell types or tissues"/>
</dbReference>
<dbReference type="ExpressionAtlas" id="Q9NZI7">
    <property type="expression patterns" value="baseline and differential"/>
</dbReference>
<dbReference type="GO" id="GO:0000785">
    <property type="term" value="C:chromatin"/>
    <property type="evidence" value="ECO:0000247"/>
    <property type="project" value="NTNU_SB"/>
</dbReference>
<dbReference type="GO" id="GO:0005829">
    <property type="term" value="C:cytosol"/>
    <property type="evidence" value="ECO:0000314"/>
    <property type="project" value="HPA"/>
</dbReference>
<dbReference type="GO" id="GO:0005654">
    <property type="term" value="C:nucleoplasm"/>
    <property type="evidence" value="ECO:0000314"/>
    <property type="project" value="HPA"/>
</dbReference>
<dbReference type="GO" id="GO:0005634">
    <property type="term" value="C:nucleus"/>
    <property type="evidence" value="ECO:0000314"/>
    <property type="project" value="GO_Central"/>
</dbReference>
<dbReference type="GO" id="GO:0001228">
    <property type="term" value="F:DNA-binding transcription activator activity, RNA polymerase II-specific"/>
    <property type="evidence" value="ECO:0000314"/>
    <property type="project" value="GO_Central"/>
</dbReference>
<dbReference type="GO" id="GO:0000981">
    <property type="term" value="F:DNA-binding transcription factor activity, RNA polymerase II-specific"/>
    <property type="evidence" value="ECO:0000247"/>
    <property type="project" value="NTNU_SB"/>
</dbReference>
<dbReference type="GO" id="GO:0000978">
    <property type="term" value="F:RNA polymerase II cis-regulatory region sequence-specific DNA binding"/>
    <property type="evidence" value="ECO:0000314"/>
    <property type="project" value="GO_Central"/>
</dbReference>
<dbReference type="GO" id="GO:1990837">
    <property type="term" value="F:sequence-specific double-stranded DNA binding"/>
    <property type="evidence" value="ECO:0000314"/>
    <property type="project" value="ARUK-UCL"/>
</dbReference>
<dbReference type="GO" id="GO:0001525">
    <property type="term" value="P:angiogenesis"/>
    <property type="evidence" value="ECO:0007669"/>
    <property type="project" value="Ensembl"/>
</dbReference>
<dbReference type="GO" id="GO:0032897">
    <property type="term" value="P:negative regulation of viral transcription"/>
    <property type="evidence" value="ECO:0000314"/>
    <property type="project" value="GO_Central"/>
</dbReference>
<dbReference type="GO" id="GO:0045944">
    <property type="term" value="P:positive regulation of transcription by RNA polymerase II"/>
    <property type="evidence" value="ECO:0000314"/>
    <property type="project" value="GO_Central"/>
</dbReference>
<dbReference type="GO" id="GO:0006357">
    <property type="term" value="P:regulation of transcription by RNA polymerase II"/>
    <property type="evidence" value="ECO:0000314"/>
    <property type="project" value="GO_Central"/>
</dbReference>
<dbReference type="CDD" id="cd09588">
    <property type="entry name" value="SAM_LBP1"/>
    <property type="match status" value="1"/>
</dbReference>
<dbReference type="FunFam" id="1.10.150.50:FF:000036">
    <property type="entry name" value="upstream-binding protein 1 isoform X1"/>
    <property type="match status" value="1"/>
</dbReference>
<dbReference type="Gene3D" id="1.10.150.50">
    <property type="entry name" value="Transcription Factor, Ets-1"/>
    <property type="match status" value="1"/>
</dbReference>
<dbReference type="InterPro" id="IPR007604">
    <property type="entry name" value="CP2"/>
</dbReference>
<dbReference type="InterPro" id="IPR013761">
    <property type="entry name" value="SAM/pointed_sf"/>
</dbReference>
<dbReference type="InterPro" id="IPR041418">
    <property type="entry name" value="SAM_3"/>
</dbReference>
<dbReference type="InterPro" id="IPR040167">
    <property type="entry name" value="TF_CP2-like"/>
</dbReference>
<dbReference type="InterPro" id="IPR037600">
    <property type="entry name" value="Ubp1_SAM"/>
</dbReference>
<dbReference type="PANTHER" id="PTHR11037">
    <property type="entry name" value="TRANSCRIPTION FACTOR CP2"/>
    <property type="match status" value="1"/>
</dbReference>
<dbReference type="PANTHER" id="PTHR11037:SF13">
    <property type="entry name" value="UPSTREAM-BINDING PROTEIN 1"/>
    <property type="match status" value="1"/>
</dbReference>
<dbReference type="Pfam" id="PF04516">
    <property type="entry name" value="CP2"/>
    <property type="match status" value="1"/>
</dbReference>
<dbReference type="Pfam" id="PF25416">
    <property type="entry name" value="GRHL1_C"/>
    <property type="match status" value="1"/>
</dbReference>
<dbReference type="Pfam" id="PF18016">
    <property type="entry name" value="SAM_3"/>
    <property type="match status" value="1"/>
</dbReference>
<dbReference type="SUPFAM" id="SSF47769">
    <property type="entry name" value="SAM/Pointed domain"/>
    <property type="match status" value="1"/>
</dbReference>
<dbReference type="PROSITE" id="PS51968">
    <property type="entry name" value="GRH_CP2_DB"/>
    <property type="match status" value="1"/>
</dbReference>
<feature type="chain" id="PRO_0000229026" description="Upstream-binding protein 1">
    <location>
        <begin position="1"/>
        <end position="540"/>
    </location>
</feature>
<feature type="domain" description="Grh/CP2 DB" evidence="3">
    <location>
        <begin position="60"/>
        <end position="296"/>
    </location>
</feature>
<feature type="region of interest" description="Disordered" evidence="4">
    <location>
        <begin position="236"/>
        <end position="270"/>
    </location>
</feature>
<feature type="region of interest" description="Disordered" evidence="4">
    <location>
        <begin position="285"/>
        <end position="368"/>
    </location>
</feature>
<feature type="compositionally biased region" description="Basic and acidic residues" evidence="4">
    <location>
        <begin position="238"/>
        <end position="262"/>
    </location>
</feature>
<feature type="compositionally biased region" description="Polar residues" evidence="4">
    <location>
        <begin position="320"/>
        <end position="368"/>
    </location>
</feature>
<feature type="modified residue" description="Phosphoserine" evidence="12">
    <location>
        <position position="22"/>
    </location>
</feature>
<feature type="modified residue" description="Phosphoserine" evidence="2">
    <location>
        <position position="390"/>
    </location>
</feature>
<feature type="modified residue" description="Phosphoserine" evidence="2">
    <location>
        <position position="393"/>
    </location>
</feature>
<feature type="splice variant" id="VSP_017730" description="In isoform 2." evidence="9 10">
    <location>
        <begin position="274"/>
        <end position="309"/>
    </location>
</feature>
<feature type="sequence variant" id="VAR_049294" description="In dbSNP:rs3736563." evidence="8">
    <original>N</original>
    <variation>S</variation>
    <location>
        <position position="109"/>
    </location>
</feature>
<feature type="sequence variant" id="VAR_025730" description="In dbSNP:rs17854430." evidence="6">
    <original>T</original>
    <variation>A</variation>
    <location>
        <position position="212"/>
    </location>
</feature>
<feature type="sequence conflict" description="In Ref. 3; BAB14501." evidence="11" ref="3">
    <original>EI</original>
    <variation>D</variation>
    <location>
        <begin position="93"/>
        <end position="94"/>
    </location>
</feature>
<feature type="sequence conflict" description="In Ref. 1." evidence="11" ref="1">
    <original>E</original>
    <variation>EE</variation>
    <location>
        <position position="273"/>
    </location>
</feature>
<feature type="sequence conflict" description="In Ref. 1." evidence="11" ref="1">
    <original>SSKRTLP</original>
    <variation>VQQADFA</variation>
    <location>
        <begin position="291"/>
        <end position="297"/>
    </location>
</feature>
<feature type="sequence conflict" description="In Ref. 1." evidence="11" ref="1">
    <original>Y</original>
    <variation>V</variation>
    <location>
        <position position="418"/>
    </location>
</feature>
<feature type="sequence conflict" description="In Ref. 5; CAH18658." evidence="11" ref="5">
    <original>R</original>
    <variation>RR</variation>
    <location>
        <position position="424"/>
    </location>
</feature>
<feature type="sequence conflict" description="In Ref. 1." evidence="11" ref="1">
    <original>G</original>
    <variation>GH</variation>
    <location>
        <position position="503"/>
    </location>
</feature>
<keyword id="KW-0025">Alternative splicing</keyword>
<keyword id="KW-0238">DNA-binding</keyword>
<keyword id="KW-0539">Nucleus</keyword>
<keyword id="KW-0597">Phosphoprotein</keyword>
<keyword id="KW-1267">Proteomics identification</keyword>
<keyword id="KW-1185">Reference proteome</keyword>
<keyword id="KW-0804">Transcription</keyword>
<keyword id="KW-0805">Transcription regulation</keyword>
<protein>
    <recommendedName>
        <fullName>Upstream-binding protein 1</fullName>
    </recommendedName>
    <alternativeName>
        <fullName>Transcription factor LBP-1</fullName>
    </alternativeName>
</protein>
<name>UBIP1_HUMAN</name>
<gene>
    <name type="primary">UBP1</name>
    <name type="synonym">LBP1</name>
</gene>
<evidence type="ECO:0000250" key="1"/>
<evidence type="ECO:0000250" key="2">
    <source>
        <dbReference type="UniProtKB" id="Q811S7"/>
    </source>
</evidence>
<evidence type="ECO:0000255" key="3">
    <source>
        <dbReference type="PROSITE-ProRule" id="PRU01313"/>
    </source>
</evidence>
<evidence type="ECO:0000256" key="4">
    <source>
        <dbReference type="SAM" id="MobiDB-lite"/>
    </source>
</evidence>
<evidence type="ECO:0000269" key="5">
    <source>
    </source>
</evidence>
<evidence type="ECO:0000269" key="6">
    <source>
    </source>
</evidence>
<evidence type="ECO:0000269" key="7">
    <source>
    </source>
</evidence>
<evidence type="ECO:0000269" key="8">
    <source>
    </source>
</evidence>
<evidence type="ECO:0000303" key="9">
    <source>
    </source>
</evidence>
<evidence type="ECO:0000303" key="10">
    <source>
    </source>
</evidence>
<evidence type="ECO:0000305" key="11"/>
<evidence type="ECO:0007744" key="12">
    <source>
    </source>
</evidence>
<comment type="function">
    <text evidence="1 5 7 8">Functions as a transcriptional activator in a promoter context-dependent manner. Modulates the placental expression of CYP11A1. Involved in regulation of the alpha-globin gene in erythroid cells. Activation of the alpha-globin promoter in erythroid cells is via synergistic interaction with TFCP2 (By similarity). Involved in regulation of the alpha-globin gene in erythroid cells. Binds strongly to sequences around the HIV-1 initiation site and weakly over the TATA-box. Represses HIV-1 transcription by inhibiting the binding of TFIID to the TATA-box.</text>
</comment>
<comment type="subunit">
    <text evidence="1">Interacts with TFCP2. Interacts with PIAS1, and is probably part of a complex containing TFCP2, UBP1 and PIAS1 (By similarity).</text>
</comment>
<comment type="interaction">
    <interactant intactId="EBI-2795133">
        <id>Q9NZI7</id>
    </interactant>
    <interactant intactId="EBI-739832">
        <id>Q8TBB1</id>
        <label>LNX1</label>
    </interactant>
    <organismsDiffer>false</organismsDiffer>
    <experiments>3</experiments>
</comment>
<comment type="interaction">
    <interactant intactId="EBI-2795133">
        <id>Q9NZI7</id>
    </interactant>
    <interactant intactId="EBI-10288852">
        <id>Q9UBU8-2</id>
        <label>MORF4L1</label>
    </interactant>
    <organismsDiffer>false</organismsDiffer>
    <experiments>3</experiments>
</comment>
<comment type="interaction">
    <interactant intactId="EBI-2795133">
        <id>Q9NZI7</id>
    </interactant>
    <interactant intactId="EBI-717422">
        <id>Q12800</id>
        <label>TFCP2</label>
    </interactant>
    <organismsDiffer>false</organismsDiffer>
    <experiments>3</experiments>
</comment>
<comment type="subcellular location">
    <subcellularLocation>
        <location evidence="8">Nucleus</location>
    </subcellularLocation>
</comment>
<comment type="alternative products">
    <event type="alternative splicing"/>
    <isoform>
        <id>Q9NZI7-1</id>
        <name>1</name>
        <name>LBP-1b</name>
        <sequence type="displayed"/>
    </isoform>
    <isoform>
        <id>Q9NZI7-4</id>
        <name>2</name>
        <name>LBP-1a</name>
        <sequence type="described" ref="VSP_017730"/>
    </isoform>
</comment>
<comment type="tissue specificity">
    <text evidence="5">Expressed in adrenal tissue, JEG-3, NCI-H295A, Hep-G2 and HeLa cell lines.</text>
</comment>
<comment type="induction">
    <text evidence="7">By HIV-1 infection of lymphocytes.</text>
</comment>
<comment type="similarity">
    <text evidence="11">Belongs to the grh/CP2 family. CP2 subfamily.</text>
</comment>
<proteinExistence type="evidence at protein level"/>
<organism>
    <name type="scientific">Homo sapiens</name>
    <name type="common">Human</name>
    <dbReference type="NCBI Taxonomy" id="9606"/>
    <lineage>
        <taxon>Eukaryota</taxon>
        <taxon>Metazoa</taxon>
        <taxon>Chordata</taxon>
        <taxon>Craniata</taxon>
        <taxon>Vertebrata</taxon>
        <taxon>Euteleostomi</taxon>
        <taxon>Mammalia</taxon>
        <taxon>Eutheria</taxon>
        <taxon>Euarchontoglires</taxon>
        <taxon>Primates</taxon>
        <taxon>Haplorrhini</taxon>
        <taxon>Catarrhini</taxon>
        <taxon>Hominidae</taxon>
        <taxon>Homo</taxon>
    </lineage>
</organism>
<accession>Q9NZI7</accession>
<accession>Q68CT0</accession>
<accession>Q86Y57</accession>
<accession>Q9H8V0</accession>
<accession>Q9UD76</accession>
<accession>Q9UD78</accession>
<sequence>MAWVLKMDEVIESGLVHDFDASLSGIGQELGAGAYSMSDVLALPIFKQEDSSLPLDGETEHPPFQYVMCAATSPAVKLHDETLTYLNQGQSYEIRMLDNRKMGDMPEINGKLVKSIIRVVFHDRRLQYTEHQQLEGWKWNRPGDRLLDLDIPMSVGIIDTRTNPSQLNAVEFLWDPAKRTSAFIQVHCISTEFTPRKHGGEKGVPFRIQVDTFKQNENGEYTDHLHSASCQIKVFKPKGADRKQKTDREKMEKRTAHEKEKYQPSYDTTILTEMRLEPIIEDAVEHEQKKSSKRTLPADYGDSLAKRGSCSPWPDAPTAYVNNSPSPAPTFTSPQQSTCSVPDSNSSSPNHQGDGASQTSGEQIQPSATIQETQQWLLKNRFSSYTRLFSNFSGADLLKLTKEDLVQICGAADGIRLYNSLKSRSVRPRLTIYVCREQPSSTVLQGQQQAASSASENGSGAPYVYHAIYLEEMIASEVARKLALVFNIPLHQINQVYRQGPTGIHILVSDQMVQNFQDESCFLFSTVKAESSDGIHIILK</sequence>